<organism>
    <name type="scientific">Rhodopseudomonas palustris (strain BisA53)</name>
    <dbReference type="NCBI Taxonomy" id="316055"/>
    <lineage>
        <taxon>Bacteria</taxon>
        <taxon>Pseudomonadati</taxon>
        <taxon>Pseudomonadota</taxon>
        <taxon>Alphaproteobacteria</taxon>
        <taxon>Hyphomicrobiales</taxon>
        <taxon>Nitrobacteraceae</taxon>
        <taxon>Rhodopseudomonas</taxon>
    </lineage>
</organism>
<protein>
    <recommendedName>
        <fullName evidence="1">NADH-quinone oxidoreductase subunit B 2</fullName>
        <ecNumber evidence="1">7.1.1.-</ecNumber>
    </recommendedName>
    <alternativeName>
        <fullName evidence="1">NADH dehydrogenase I subunit B 2</fullName>
    </alternativeName>
    <alternativeName>
        <fullName evidence="1">NDH-1 subunit B 2</fullName>
    </alternativeName>
</protein>
<sequence>MGLSPGSAKLGSPAQPLIAPAATGILDPRTGRPVGADDRFFVEVNNELSDKGFFVAATDDLITWARTGSLMWMTFGLACCAVEMMQMSMPRYDAERFGFAPRASPRQSDVMIVAGTLTNKMAPALRKVYDQMPEPRYVISMGSCANGGGYYHYSYAVVRGCDRIVPIDIYVPGCPPTAEALLYGVMLLQKKIRRIGTIER</sequence>
<evidence type="ECO:0000255" key="1">
    <source>
        <dbReference type="HAMAP-Rule" id="MF_01356"/>
    </source>
</evidence>
<reference key="1">
    <citation type="submission" date="2006-09" db="EMBL/GenBank/DDBJ databases">
        <title>Complete sequence of Rhodopseudomonas palustris BisA53.</title>
        <authorList>
            <consortium name="US DOE Joint Genome Institute"/>
            <person name="Copeland A."/>
            <person name="Lucas S."/>
            <person name="Lapidus A."/>
            <person name="Barry K."/>
            <person name="Detter J.C."/>
            <person name="Glavina del Rio T."/>
            <person name="Hammon N."/>
            <person name="Israni S."/>
            <person name="Dalin E."/>
            <person name="Tice H."/>
            <person name="Pitluck S."/>
            <person name="Chain P."/>
            <person name="Malfatti S."/>
            <person name="Shin M."/>
            <person name="Vergez L."/>
            <person name="Schmutz J."/>
            <person name="Larimer F."/>
            <person name="Land M."/>
            <person name="Hauser L."/>
            <person name="Pelletier D.A."/>
            <person name="Kyrpides N."/>
            <person name="Kim E."/>
            <person name="Harwood C.S."/>
            <person name="Oda Y."/>
            <person name="Richardson P."/>
        </authorList>
    </citation>
    <scope>NUCLEOTIDE SEQUENCE [LARGE SCALE GENOMIC DNA]</scope>
    <source>
        <strain>BisA53</strain>
    </source>
</reference>
<gene>
    <name evidence="1" type="primary">nuoB2</name>
    <name type="ordered locus">RPE_2520</name>
</gene>
<proteinExistence type="inferred from homology"/>
<comment type="function">
    <text evidence="1">NDH-1 shuttles electrons from NADH, via FMN and iron-sulfur (Fe-S) centers, to quinones in the respiratory chain. The immediate electron acceptor for the enzyme in this species is believed to be ubiquinone. Couples the redox reaction to proton translocation (for every two electrons transferred, four hydrogen ions are translocated across the cytoplasmic membrane), and thus conserves the redox energy in a proton gradient.</text>
</comment>
<comment type="catalytic activity">
    <reaction evidence="1">
        <text>a quinone + NADH + 5 H(+)(in) = a quinol + NAD(+) + 4 H(+)(out)</text>
        <dbReference type="Rhea" id="RHEA:57888"/>
        <dbReference type="ChEBI" id="CHEBI:15378"/>
        <dbReference type="ChEBI" id="CHEBI:24646"/>
        <dbReference type="ChEBI" id="CHEBI:57540"/>
        <dbReference type="ChEBI" id="CHEBI:57945"/>
        <dbReference type="ChEBI" id="CHEBI:132124"/>
    </reaction>
</comment>
<comment type="cofactor">
    <cofactor evidence="1">
        <name>[4Fe-4S] cluster</name>
        <dbReference type="ChEBI" id="CHEBI:49883"/>
    </cofactor>
    <text evidence="1">Binds 1 [4Fe-4S] cluster.</text>
</comment>
<comment type="subunit">
    <text evidence="1">NDH-1 is composed of 14 different subunits. Subunits NuoB, C, D, E, F, and G constitute the peripheral sector of the complex.</text>
</comment>
<comment type="subcellular location">
    <subcellularLocation>
        <location evidence="1">Cell inner membrane</location>
        <topology evidence="1">Peripheral membrane protein</topology>
        <orientation evidence="1">Cytoplasmic side</orientation>
    </subcellularLocation>
</comment>
<comment type="similarity">
    <text evidence="1">Belongs to the complex I 20 kDa subunit family.</text>
</comment>
<accession>Q07NM6</accession>
<dbReference type="EC" id="7.1.1.-" evidence="1"/>
<dbReference type="EMBL" id="CP000463">
    <property type="protein sequence ID" value="ABJ06458.1"/>
    <property type="molecule type" value="Genomic_DNA"/>
</dbReference>
<dbReference type="SMR" id="Q07NM6"/>
<dbReference type="STRING" id="316055.RPE_2520"/>
<dbReference type="KEGG" id="rpe:RPE_2520"/>
<dbReference type="eggNOG" id="COG0377">
    <property type="taxonomic scope" value="Bacteria"/>
</dbReference>
<dbReference type="HOGENOM" id="CLU_055737_7_0_5"/>
<dbReference type="OrthoDB" id="9786737at2"/>
<dbReference type="GO" id="GO:0005886">
    <property type="term" value="C:plasma membrane"/>
    <property type="evidence" value="ECO:0007669"/>
    <property type="project" value="UniProtKB-SubCell"/>
</dbReference>
<dbReference type="GO" id="GO:0045271">
    <property type="term" value="C:respiratory chain complex I"/>
    <property type="evidence" value="ECO:0007669"/>
    <property type="project" value="TreeGrafter"/>
</dbReference>
<dbReference type="GO" id="GO:0051539">
    <property type="term" value="F:4 iron, 4 sulfur cluster binding"/>
    <property type="evidence" value="ECO:0007669"/>
    <property type="project" value="UniProtKB-KW"/>
</dbReference>
<dbReference type="GO" id="GO:0005506">
    <property type="term" value="F:iron ion binding"/>
    <property type="evidence" value="ECO:0007669"/>
    <property type="project" value="UniProtKB-UniRule"/>
</dbReference>
<dbReference type="GO" id="GO:0008137">
    <property type="term" value="F:NADH dehydrogenase (ubiquinone) activity"/>
    <property type="evidence" value="ECO:0007669"/>
    <property type="project" value="InterPro"/>
</dbReference>
<dbReference type="GO" id="GO:0050136">
    <property type="term" value="F:NADH:ubiquinone reductase (non-electrogenic) activity"/>
    <property type="evidence" value="ECO:0007669"/>
    <property type="project" value="UniProtKB-UniRule"/>
</dbReference>
<dbReference type="GO" id="GO:0048038">
    <property type="term" value="F:quinone binding"/>
    <property type="evidence" value="ECO:0007669"/>
    <property type="project" value="UniProtKB-KW"/>
</dbReference>
<dbReference type="GO" id="GO:0009060">
    <property type="term" value="P:aerobic respiration"/>
    <property type="evidence" value="ECO:0007669"/>
    <property type="project" value="TreeGrafter"/>
</dbReference>
<dbReference type="GO" id="GO:0015990">
    <property type="term" value="P:electron transport coupled proton transport"/>
    <property type="evidence" value="ECO:0007669"/>
    <property type="project" value="TreeGrafter"/>
</dbReference>
<dbReference type="FunFam" id="3.40.50.12280:FF:000001">
    <property type="entry name" value="NADH-quinone oxidoreductase subunit B 2"/>
    <property type="match status" value="1"/>
</dbReference>
<dbReference type="Gene3D" id="3.40.50.12280">
    <property type="match status" value="1"/>
</dbReference>
<dbReference type="HAMAP" id="MF_01356">
    <property type="entry name" value="NDH1_NuoB"/>
    <property type="match status" value="1"/>
</dbReference>
<dbReference type="InterPro" id="IPR006137">
    <property type="entry name" value="NADH_UbQ_OxRdtase-like_20kDa"/>
</dbReference>
<dbReference type="InterPro" id="IPR006138">
    <property type="entry name" value="NADH_UQ_OxRdtase_20Kd_su"/>
</dbReference>
<dbReference type="NCBIfam" id="TIGR01957">
    <property type="entry name" value="nuoB_fam"/>
    <property type="match status" value="1"/>
</dbReference>
<dbReference type="NCBIfam" id="NF005012">
    <property type="entry name" value="PRK06411.1"/>
    <property type="match status" value="1"/>
</dbReference>
<dbReference type="PANTHER" id="PTHR11995">
    <property type="entry name" value="NADH DEHYDROGENASE"/>
    <property type="match status" value="1"/>
</dbReference>
<dbReference type="PANTHER" id="PTHR11995:SF14">
    <property type="entry name" value="NADH DEHYDROGENASE [UBIQUINONE] IRON-SULFUR PROTEIN 7, MITOCHONDRIAL"/>
    <property type="match status" value="1"/>
</dbReference>
<dbReference type="Pfam" id="PF01058">
    <property type="entry name" value="Oxidored_q6"/>
    <property type="match status" value="1"/>
</dbReference>
<dbReference type="SUPFAM" id="SSF56770">
    <property type="entry name" value="HydA/Nqo6-like"/>
    <property type="match status" value="1"/>
</dbReference>
<dbReference type="PROSITE" id="PS01150">
    <property type="entry name" value="COMPLEX1_20K"/>
    <property type="match status" value="1"/>
</dbReference>
<name>NUOB2_RHOP5</name>
<feature type="chain" id="PRO_0000376339" description="NADH-quinone oxidoreductase subunit B 2">
    <location>
        <begin position="1"/>
        <end position="200"/>
    </location>
</feature>
<feature type="binding site" evidence="1">
    <location>
        <position position="79"/>
    </location>
    <ligand>
        <name>[4Fe-4S] cluster</name>
        <dbReference type="ChEBI" id="CHEBI:49883"/>
    </ligand>
</feature>
<feature type="binding site" evidence="1">
    <location>
        <position position="80"/>
    </location>
    <ligand>
        <name>[4Fe-4S] cluster</name>
        <dbReference type="ChEBI" id="CHEBI:49883"/>
    </ligand>
</feature>
<feature type="binding site" evidence="1">
    <location>
        <position position="144"/>
    </location>
    <ligand>
        <name>[4Fe-4S] cluster</name>
        <dbReference type="ChEBI" id="CHEBI:49883"/>
    </ligand>
</feature>
<feature type="binding site" evidence="1">
    <location>
        <position position="174"/>
    </location>
    <ligand>
        <name>[4Fe-4S] cluster</name>
        <dbReference type="ChEBI" id="CHEBI:49883"/>
    </ligand>
</feature>
<keyword id="KW-0004">4Fe-4S</keyword>
<keyword id="KW-0997">Cell inner membrane</keyword>
<keyword id="KW-1003">Cell membrane</keyword>
<keyword id="KW-0408">Iron</keyword>
<keyword id="KW-0411">Iron-sulfur</keyword>
<keyword id="KW-0472">Membrane</keyword>
<keyword id="KW-0479">Metal-binding</keyword>
<keyword id="KW-0520">NAD</keyword>
<keyword id="KW-0874">Quinone</keyword>
<keyword id="KW-1278">Translocase</keyword>
<keyword id="KW-0813">Transport</keyword>
<keyword id="KW-0830">Ubiquinone</keyword>